<organism>
    <name type="scientific">Halorhodospira halophila (strain DSM 244 / SL1)</name>
    <name type="common">Ectothiorhodospira halophila (strain DSM 244 / SL1)</name>
    <dbReference type="NCBI Taxonomy" id="349124"/>
    <lineage>
        <taxon>Bacteria</taxon>
        <taxon>Pseudomonadati</taxon>
        <taxon>Pseudomonadota</taxon>
        <taxon>Gammaproteobacteria</taxon>
        <taxon>Chromatiales</taxon>
        <taxon>Ectothiorhodospiraceae</taxon>
        <taxon>Halorhodospira</taxon>
    </lineage>
</organism>
<proteinExistence type="inferred from homology"/>
<name>FETP_HALHL</name>
<evidence type="ECO:0000255" key="1">
    <source>
        <dbReference type="HAMAP-Rule" id="MF_00686"/>
    </source>
</evidence>
<accession>A1WW56</accession>
<keyword id="KW-0408">Iron</keyword>
<keyword id="KW-1185">Reference proteome</keyword>
<reference key="1">
    <citation type="submission" date="2006-12" db="EMBL/GenBank/DDBJ databases">
        <title>Complete sequence of Halorhodospira halophila SL1.</title>
        <authorList>
            <consortium name="US DOE Joint Genome Institute"/>
            <person name="Copeland A."/>
            <person name="Lucas S."/>
            <person name="Lapidus A."/>
            <person name="Barry K."/>
            <person name="Detter J.C."/>
            <person name="Glavina del Rio T."/>
            <person name="Hammon N."/>
            <person name="Israni S."/>
            <person name="Dalin E."/>
            <person name="Tice H."/>
            <person name="Pitluck S."/>
            <person name="Saunders E."/>
            <person name="Brettin T."/>
            <person name="Bruce D."/>
            <person name="Han C."/>
            <person name="Tapia R."/>
            <person name="Schmutz J."/>
            <person name="Larimer F."/>
            <person name="Land M."/>
            <person name="Hauser L."/>
            <person name="Kyrpides N."/>
            <person name="Mikhailova N."/>
            <person name="Hoff W."/>
            <person name="Richardson P."/>
        </authorList>
    </citation>
    <scope>NUCLEOTIDE SEQUENCE [LARGE SCALE GENOMIC DNA]</scope>
    <source>
        <strain>DSM 244 / SL1</strain>
    </source>
</reference>
<sequence>MSRKVHCVKLQQEADGLDRPPYPGELGQRIYDNVSKQAWSMWVQQQTMLINEYRLTPADPKARSFLEREMENFFFGQGSAPPPDFSPDHS</sequence>
<gene>
    <name type="ordered locus">Hhal_1142</name>
</gene>
<protein>
    <recommendedName>
        <fullName evidence="1">Probable Fe(2+)-trafficking protein</fullName>
    </recommendedName>
</protein>
<feature type="chain" id="PRO_1000045040" description="Probable Fe(2+)-trafficking protein">
    <location>
        <begin position="1"/>
        <end position="90"/>
    </location>
</feature>
<comment type="function">
    <text evidence="1">Could be a mediator in iron transactions between iron acquisition and iron-requiring processes, such as synthesis and/or repair of Fe-S clusters in biosynthetic enzymes.</text>
</comment>
<comment type="similarity">
    <text evidence="1">Belongs to the Fe(2+)-trafficking protein family.</text>
</comment>
<dbReference type="EMBL" id="CP000544">
    <property type="protein sequence ID" value="ABM61918.1"/>
    <property type="molecule type" value="Genomic_DNA"/>
</dbReference>
<dbReference type="RefSeq" id="WP_011813941.1">
    <property type="nucleotide sequence ID" value="NC_008789.1"/>
</dbReference>
<dbReference type="SMR" id="A1WW56"/>
<dbReference type="STRING" id="349124.Hhal_1142"/>
<dbReference type="KEGG" id="hha:Hhal_1142"/>
<dbReference type="eggNOG" id="COG2924">
    <property type="taxonomic scope" value="Bacteria"/>
</dbReference>
<dbReference type="HOGENOM" id="CLU_170994_0_0_6"/>
<dbReference type="OrthoDB" id="9804318at2"/>
<dbReference type="Proteomes" id="UP000000647">
    <property type="component" value="Chromosome"/>
</dbReference>
<dbReference type="GO" id="GO:0005829">
    <property type="term" value="C:cytosol"/>
    <property type="evidence" value="ECO:0007669"/>
    <property type="project" value="TreeGrafter"/>
</dbReference>
<dbReference type="GO" id="GO:0005506">
    <property type="term" value="F:iron ion binding"/>
    <property type="evidence" value="ECO:0007669"/>
    <property type="project" value="UniProtKB-UniRule"/>
</dbReference>
<dbReference type="GO" id="GO:0034599">
    <property type="term" value="P:cellular response to oxidative stress"/>
    <property type="evidence" value="ECO:0007669"/>
    <property type="project" value="TreeGrafter"/>
</dbReference>
<dbReference type="FunFam" id="1.10.3880.10:FF:000001">
    <property type="entry name" value="Probable Fe(2+)-trafficking protein"/>
    <property type="match status" value="1"/>
</dbReference>
<dbReference type="Gene3D" id="1.10.3880.10">
    <property type="entry name" value="Fe(II) trafficking protein YggX"/>
    <property type="match status" value="1"/>
</dbReference>
<dbReference type="HAMAP" id="MF_00686">
    <property type="entry name" value="Fe_traffic_YggX"/>
    <property type="match status" value="1"/>
</dbReference>
<dbReference type="InterPro" id="IPR007457">
    <property type="entry name" value="Fe_traffick_prot_YggX"/>
</dbReference>
<dbReference type="InterPro" id="IPR036766">
    <property type="entry name" value="Fe_traffick_prot_YggX_sf"/>
</dbReference>
<dbReference type="NCBIfam" id="NF003817">
    <property type="entry name" value="PRK05408.1"/>
    <property type="match status" value="1"/>
</dbReference>
<dbReference type="PANTHER" id="PTHR36965">
    <property type="entry name" value="FE(2+)-TRAFFICKING PROTEIN-RELATED"/>
    <property type="match status" value="1"/>
</dbReference>
<dbReference type="PANTHER" id="PTHR36965:SF1">
    <property type="entry name" value="FE(2+)-TRAFFICKING PROTEIN-RELATED"/>
    <property type="match status" value="1"/>
</dbReference>
<dbReference type="Pfam" id="PF04362">
    <property type="entry name" value="Iron_traffic"/>
    <property type="match status" value="1"/>
</dbReference>
<dbReference type="PIRSF" id="PIRSF029827">
    <property type="entry name" value="Fe_traffic_YggX"/>
    <property type="match status" value="1"/>
</dbReference>
<dbReference type="SUPFAM" id="SSF111148">
    <property type="entry name" value="YggX-like"/>
    <property type="match status" value="1"/>
</dbReference>